<organism>
    <name type="scientific">Solanum lycopersicum</name>
    <name type="common">Tomato</name>
    <name type="synonym">Lycopersicon esculentum</name>
    <dbReference type="NCBI Taxonomy" id="4081"/>
    <lineage>
        <taxon>Eukaryota</taxon>
        <taxon>Viridiplantae</taxon>
        <taxon>Streptophyta</taxon>
        <taxon>Embryophyta</taxon>
        <taxon>Tracheophyta</taxon>
        <taxon>Spermatophyta</taxon>
        <taxon>Magnoliopsida</taxon>
        <taxon>eudicotyledons</taxon>
        <taxon>Gunneridae</taxon>
        <taxon>Pentapetalae</taxon>
        <taxon>asterids</taxon>
        <taxon>lamiids</taxon>
        <taxon>Solanales</taxon>
        <taxon>Solanaceae</taxon>
        <taxon>Solanoideae</taxon>
        <taxon>Solaneae</taxon>
        <taxon>Solanum</taxon>
        <taxon>Solanum subgen. Lycopersicon</taxon>
    </lineage>
</organism>
<accession>Q9M723</accession>
<feature type="chain" id="PRO_0000447559" description="Protein JAZ7">
    <location>
        <begin position="1"/>
        <end position="228"/>
    </location>
</feature>
<feature type="domain" description="Tify" evidence="3">
    <location>
        <begin position="101"/>
        <end position="136"/>
    </location>
</feature>
<feature type="short sequence motif" description="Jas" evidence="2">
    <location>
        <begin position="176"/>
        <end position="199"/>
    </location>
</feature>
<feature type="short sequence motif" description="Nuclear localization signal" evidence="4">
    <location>
        <begin position="177"/>
        <end position="184"/>
    </location>
</feature>
<sequence length="228" mass="26374">MDSRMEIDFMDLNSKPKLSEMEKQHKKVSGMKWPFSLADLATHHEHTFFQNYKSTPIVSINSKNSSLNNYKSTIDPQYFRGTFPLLAKTSTYDSRKNYDNLSPNESTLTIFYMGEVHIFPGISPEKAELIIDLVSKSTTLHMDEILEKVMNKEKYEENKSDPSNASTNYAKGALAMARRATLARFLEKRKHRLIKARPYLYGENLSKFPFDIQQQEEETASSSVHWEN</sequence>
<gene>
    <name evidence="9" type="primary">JAZ7</name>
    <name evidence="8" type="synonym">PRG1</name>
    <name evidence="10" type="ordered locus">Solyc11g011030</name>
</gene>
<dbReference type="EMBL" id="AF146690">
    <property type="protein sequence ID" value="AAF72099.1"/>
    <property type="molecule type" value="mRNA"/>
</dbReference>
<dbReference type="EMBL" id="CM001074">
    <property type="status" value="NOT_ANNOTATED_CDS"/>
    <property type="molecule type" value="Genomic_DNA"/>
</dbReference>
<dbReference type="RefSeq" id="NP_001234261.1">
    <property type="nucleotide sequence ID" value="NM_001247332.1"/>
</dbReference>
<dbReference type="STRING" id="4081.Q9M723"/>
<dbReference type="PaxDb" id="4081-Solyc11g011030.1.1"/>
<dbReference type="EnsemblPlants" id="Solyc11g011030.2.1">
    <property type="protein sequence ID" value="Solyc11g011030.2.1"/>
    <property type="gene ID" value="Solyc11g011030.2"/>
</dbReference>
<dbReference type="GeneID" id="543601"/>
<dbReference type="Gramene" id="Solyc11g011030.2.1">
    <property type="protein sequence ID" value="Solyc11g011030.2.1"/>
    <property type="gene ID" value="Solyc11g011030.2"/>
</dbReference>
<dbReference type="KEGG" id="sly:543601"/>
<dbReference type="eggNOG" id="ENOG502R736">
    <property type="taxonomic scope" value="Eukaryota"/>
</dbReference>
<dbReference type="HOGENOM" id="CLU_1216550_0_0_1"/>
<dbReference type="InParanoid" id="Q9M723"/>
<dbReference type="OMA" id="RMEIDFM"/>
<dbReference type="OrthoDB" id="1641466at2759"/>
<dbReference type="Proteomes" id="UP000004994">
    <property type="component" value="Chromosome 11"/>
</dbReference>
<dbReference type="GO" id="GO:0005634">
    <property type="term" value="C:nucleus"/>
    <property type="evidence" value="ECO:0000318"/>
    <property type="project" value="GO_Central"/>
</dbReference>
<dbReference type="GO" id="GO:0031347">
    <property type="term" value="P:regulation of defense response"/>
    <property type="evidence" value="ECO:0000318"/>
    <property type="project" value="GO_Central"/>
</dbReference>
<dbReference type="GO" id="GO:2000022">
    <property type="term" value="P:regulation of jasmonic acid mediated signaling pathway"/>
    <property type="evidence" value="ECO:0000318"/>
    <property type="project" value="GO_Central"/>
</dbReference>
<dbReference type="GO" id="GO:0009611">
    <property type="term" value="P:response to wounding"/>
    <property type="evidence" value="ECO:0000318"/>
    <property type="project" value="GO_Central"/>
</dbReference>
<dbReference type="InterPro" id="IPR018467">
    <property type="entry name" value="CCT_CS"/>
</dbReference>
<dbReference type="InterPro" id="IPR040390">
    <property type="entry name" value="TIFY/JAZ"/>
</dbReference>
<dbReference type="InterPro" id="IPR010399">
    <property type="entry name" value="Tify_dom"/>
</dbReference>
<dbReference type="PANTHER" id="PTHR33077:SF74">
    <property type="entry name" value="PROTEIN JAZ7"/>
    <property type="match status" value="1"/>
</dbReference>
<dbReference type="PANTHER" id="PTHR33077">
    <property type="entry name" value="PROTEIN TIFY 4A-RELATED-RELATED"/>
    <property type="match status" value="1"/>
</dbReference>
<dbReference type="Pfam" id="PF09425">
    <property type="entry name" value="Jas_motif"/>
    <property type="match status" value="1"/>
</dbReference>
<dbReference type="Pfam" id="PF06200">
    <property type="entry name" value="tify"/>
    <property type="match status" value="1"/>
</dbReference>
<dbReference type="SMART" id="SM00979">
    <property type="entry name" value="TIFY"/>
    <property type="match status" value="1"/>
</dbReference>
<dbReference type="PROSITE" id="PS51320">
    <property type="entry name" value="TIFY"/>
    <property type="match status" value="1"/>
</dbReference>
<proteinExistence type="evidence at protein level"/>
<protein>
    <recommendedName>
        <fullName evidence="10">Protein JAZ7</fullName>
    </recommendedName>
    <alternativeName>
        <fullName evidence="10">Jasmonate ZIM domain-containing protein 7</fullName>
    </alternativeName>
    <alternativeName>
        <fullName evidence="8">Pto-responsive gene 1 protein</fullName>
    </alternativeName>
</protein>
<comment type="function">
    <text evidence="1">Repressor of jasmonate responses.</text>
</comment>
<comment type="subunit">
    <text evidence="6 7">Interacts with MYC2 (via N-terminus) (PubMed:28733419, PubMed:30610166). JAZ7 competes with MED25 for binding to MYC2 (PubMed:30610166). Interacts with MTB1 (via N-terminus) (PubMed:30610166).</text>
</comment>
<comment type="subcellular location">
    <subcellularLocation>
        <location evidence="1 4">Nucleus</location>
    </subcellularLocation>
</comment>
<comment type="induction">
    <text evidence="5">Induced by infection with the bacterial pathogen Pseudomonas syringae pv tomato DC3000.</text>
</comment>
<comment type="similarity">
    <text evidence="10">Belongs to the TIFY/JAZ family.</text>
</comment>
<keyword id="KW-1184">Jasmonic acid signaling pathway</keyword>
<keyword id="KW-0539">Nucleus</keyword>
<keyword id="KW-1185">Reference proteome</keyword>
<keyword id="KW-0678">Repressor</keyword>
<keyword id="KW-0804">Transcription</keyword>
<keyword id="KW-0805">Transcription regulation</keyword>
<name>JAZ7_SOLLC</name>
<evidence type="ECO:0000250" key="1">
    <source>
        <dbReference type="UniProtKB" id="Q9LMA8"/>
    </source>
</evidence>
<evidence type="ECO:0000255" key="2"/>
<evidence type="ECO:0000255" key="3">
    <source>
        <dbReference type="PROSITE-ProRule" id="PRU00650"/>
    </source>
</evidence>
<evidence type="ECO:0000255" key="4">
    <source>
        <dbReference type="PROSITE-ProRule" id="PRU00768"/>
    </source>
</evidence>
<evidence type="ECO:0000269" key="5">
    <source>
    </source>
</evidence>
<evidence type="ECO:0000269" key="6">
    <source>
    </source>
</evidence>
<evidence type="ECO:0000269" key="7">
    <source>
    </source>
</evidence>
<evidence type="ECO:0000303" key="8">
    <source>
    </source>
</evidence>
<evidence type="ECO:0000303" key="9">
    <source>
    </source>
</evidence>
<evidence type="ECO:0000305" key="10"/>
<reference key="1">
    <citation type="journal article" date="2003" name="Plant J.">
        <title>Virulence systems of Pseudomonas syringae pv. tomato promote bacterial speck disease in tomato by targeting the jasmonate signaling pathway.</title>
        <authorList>
            <person name="Zhao Y."/>
            <person name="Thilmony R."/>
            <person name="Bender C.L."/>
            <person name="Schaller A."/>
            <person name="He S.Y."/>
            <person name="Howe G.A."/>
        </authorList>
    </citation>
    <scope>NUCLEOTIDE SEQUENCE [MRNA]</scope>
    <scope>INDUCTION BY INFECTION WITH PSEUDOMONAS SYRINGAE</scope>
</reference>
<reference key="2">
    <citation type="journal article" date="2012" name="Nature">
        <title>The tomato genome sequence provides insights into fleshy fruit evolution.</title>
        <authorList>
            <consortium name="Tomato Genome Consortium"/>
        </authorList>
    </citation>
    <scope>NUCLEOTIDE SEQUENCE [LARGE SCALE GENOMIC DNA]</scope>
    <source>
        <strain>cv. Heinz 1706</strain>
    </source>
</reference>
<reference key="3">
    <citation type="journal article" date="2017" name="Plant Cell">
        <title>MYC2 orchestrates a hierarchical transcriptional cascade that regulates jasmonate-mediated plant immunity in tomato.</title>
        <authorList>
            <person name="Du M."/>
            <person name="Zhao J."/>
            <person name="Tzeng D.T.W."/>
            <person name="Liu Y."/>
            <person name="Deng L."/>
            <person name="Yang T."/>
            <person name="Zhai Q."/>
            <person name="Wu F."/>
            <person name="Huang Z."/>
            <person name="Zhou M."/>
            <person name="Wang Q."/>
            <person name="Chen Q."/>
            <person name="Zhong S."/>
            <person name="Li C.B."/>
            <person name="Li C."/>
        </authorList>
    </citation>
    <scope>INTERACTION WITH MYC2</scope>
</reference>
<reference key="4">
    <citation type="journal article" date="2019" name="Plant Cell">
        <title>MYC2 regulates the termination of jasmonate signaling via an autoregulatory negative feedback loop.</title>
        <authorList>
            <person name="Liu Y."/>
            <person name="Du M."/>
            <person name="Deng L."/>
            <person name="Shen J."/>
            <person name="Fang M."/>
            <person name="Chen Q."/>
            <person name="Lu Y."/>
            <person name="Wang Q."/>
            <person name="Li C."/>
            <person name="Zhai Q."/>
        </authorList>
    </citation>
    <scope>INTERACTION WITH MYC2 AND MTB1</scope>
</reference>